<evidence type="ECO:0000255" key="1">
    <source>
        <dbReference type="HAMAP-Rule" id="MF_01572"/>
    </source>
</evidence>
<comment type="subcellular location">
    <subcellularLocation>
        <location evidence="1">Cell membrane</location>
        <topology evidence="1">Multi-pass membrane protein</topology>
    </subcellularLocation>
</comment>
<comment type="similarity">
    <text evidence="1">Belongs to the UPF0397 family.</text>
</comment>
<accession>C3LH78</accession>
<sequence length="182" mass="19252">MNRLSTKLVVAIGIGSALYGILGLWGFSIAPNTFIKPALAILTVFGALFGPVAGLLIGLIGHTVTDTIAGWSIWWGWVISSGIIGFTMGFIQKRVGFSVKNGTYNKGDISYLAITGLIGIVIAIIFAGAFDIIVMGEPFDKIVIQVLGATIADVIVFLVLGLPITIGLAKSNKKHTHLKIEK</sequence>
<reference key="1">
    <citation type="submission" date="2008-10" db="EMBL/GenBank/DDBJ databases">
        <title>Genome sequence of Bacillus anthracis str. CDC 684.</title>
        <authorList>
            <person name="Dodson R.J."/>
            <person name="Munk A.C."/>
            <person name="Brettin T."/>
            <person name="Bruce D."/>
            <person name="Detter C."/>
            <person name="Tapia R."/>
            <person name="Han C."/>
            <person name="Sutton G."/>
            <person name="Sims D."/>
        </authorList>
    </citation>
    <scope>NUCLEOTIDE SEQUENCE [LARGE SCALE GENOMIC DNA]</scope>
    <source>
        <strain>CDC 684 / NRRL 3495</strain>
    </source>
</reference>
<name>Y1951_BACAC</name>
<proteinExistence type="inferred from homology"/>
<organism>
    <name type="scientific">Bacillus anthracis (strain CDC 684 / NRRL 3495)</name>
    <dbReference type="NCBI Taxonomy" id="568206"/>
    <lineage>
        <taxon>Bacteria</taxon>
        <taxon>Bacillati</taxon>
        <taxon>Bacillota</taxon>
        <taxon>Bacilli</taxon>
        <taxon>Bacillales</taxon>
        <taxon>Bacillaceae</taxon>
        <taxon>Bacillus</taxon>
        <taxon>Bacillus cereus group</taxon>
    </lineage>
</organism>
<keyword id="KW-1003">Cell membrane</keyword>
<keyword id="KW-0472">Membrane</keyword>
<keyword id="KW-0812">Transmembrane</keyword>
<keyword id="KW-1133">Transmembrane helix</keyword>
<dbReference type="EMBL" id="CP001215">
    <property type="protein sequence ID" value="ACP14339.1"/>
    <property type="molecule type" value="Genomic_DNA"/>
</dbReference>
<dbReference type="RefSeq" id="WP_001081093.1">
    <property type="nucleotide sequence ID" value="NC_012581.1"/>
</dbReference>
<dbReference type="SMR" id="C3LH78"/>
<dbReference type="KEGG" id="bah:BAMEG_1951"/>
<dbReference type="HOGENOM" id="CLU_120023_0_0_9"/>
<dbReference type="GO" id="GO:0005886">
    <property type="term" value="C:plasma membrane"/>
    <property type="evidence" value="ECO:0007669"/>
    <property type="project" value="UniProtKB-SubCell"/>
</dbReference>
<dbReference type="Gene3D" id="1.10.1760.20">
    <property type="match status" value="1"/>
</dbReference>
<dbReference type="HAMAP" id="MF_01572">
    <property type="entry name" value="UPF0397"/>
    <property type="match status" value="1"/>
</dbReference>
<dbReference type="InterPro" id="IPR009825">
    <property type="entry name" value="ECF_substrate-spec-like"/>
</dbReference>
<dbReference type="InterPro" id="IPR022914">
    <property type="entry name" value="UPF0397"/>
</dbReference>
<dbReference type="NCBIfam" id="NF010182">
    <property type="entry name" value="PRK13661.1"/>
    <property type="match status" value="1"/>
</dbReference>
<dbReference type="PANTHER" id="PTHR37815">
    <property type="entry name" value="UPF0397 PROTEIN BC_2624-RELATED"/>
    <property type="match status" value="1"/>
</dbReference>
<dbReference type="PANTHER" id="PTHR37815:SF3">
    <property type="entry name" value="UPF0397 PROTEIN SPR0429"/>
    <property type="match status" value="1"/>
</dbReference>
<dbReference type="Pfam" id="PF07155">
    <property type="entry name" value="ECF-ribofla_trS"/>
    <property type="match status" value="1"/>
</dbReference>
<protein>
    <recommendedName>
        <fullName evidence="1">UPF0397 protein BAMEG_1951</fullName>
    </recommendedName>
</protein>
<feature type="chain" id="PRO_1000185566" description="UPF0397 protein BAMEG_1951">
    <location>
        <begin position="1"/>
        <end position="182"/>
    </location>
</feature>
<feature type="transmembrane region" description="Helical" evidence="1">
    <location>
        <begin position="9"/>
        <end position="29"/>
    </location>
</feature>
<feature type="transmembrane region" description="Helical" evidence="1">
    <location>
        <begin position="40"/>
        <end position="60"/>
    </location>
</feature>
<feature type="transmembrane region" description="Helical" evidence="1">
    <location>
        <begin position="71"/>
        <end position="91"/>
    </location>
</feature>
<feature type="transmembrane region" description="Helical" evidence="1">
    <location>
        <begin position="114"/>
        <end position="134"/>
    </location>
</feature>
<feature type="transmembrane region" description="Helical" evidence="1">
    <location>
        <begin position="142"/>
        <end position="162"/>
    </location>
</feature>
<gene>
    <name type="ordered locus">BAMEG_1951</name>
</gene>